<feature type="chain" id="PRO_0000302874" description="Phosphatidylinositol 3,4,5-trisphosphate 5-phosphatase 2B">
    <location>
        <begin position="1"/>
        <end position="1226"/>
    </location>
</feature>
<feature type="domain" description="SH2" evidence="6">
    <location>
        <begin position="6"/>
        <end position="102"/>
    </location>
</feature>
<feature type="domain" description="SAM" evidence="5">
    <location>
        <begin position="1163"/>
        <end position="1226"/>
    </location>
</feature>
<feature type="region of interest" description="Disordered" evidence="7">
    <location>
        <begin position="106"/>
        <end position="144"/>
    </location>
</feature>
<feature type="region of interest" description="Disordered" evidence="7">
    <location>
        <begin position="945"/>
        <end position="964"/>
    </location>
</feature>
<feature type="region of interest" description="Disordered" evidence="7">
    <location>
        <begin position="985"/>
        <end position="1035"/>
    </location>
</feature>
<feature type="short sequence motif" description="NPXY motif">
    <location>
        <begin position="906"/>
        <end position="909"/>
    </location>
</feature>
<feature type="compositionally biased region" description="Acidic residues" evidence="7">
    <location>
        <begin position="108"/>
        <end position="117"/>
    </location>
</feature>
<feature type="compositionally biased region" description="Low complexity" evidence="7">
    <location>
        <begin position="127"/>
        <end position="144"/>
    </location>
</feature>
<feature type="compositionally biased region" description="Low complexity" evidence="7">
    <location>
        <begin position="1011"/>
        <end position="1025"/>
    </location>
</feature>
<feature type="modified residue" description="Phosphotyrosine" evidence="1">
    <location>
        <position position="909"/>
    </location>
</feature>
<accession>Q2I6J0</accession>
<gene>
    <name type="primary">inppl1b</name>
    <name type="synonym">inppl1</name>
    <name type="synonym">ship2b</name>
</gene>
<dbReference type="EC" id="3.1.3.86" evidence="3"/>
<dbReference type="EMBL" id="DQ272662">
    <property type="protein sequence ID" value="ABB84852.1"/>
    <property type="molecule type" value="mRNA"/>
</dbReference>
<dbReference type="SMR" id="Q2I6J0"/>
<dbReference type="FunCoup" id="Q2I6J0">
    <property type="interactions" value="2"/>
</dbReference>
<dbReference type="STRING" id="7955.ENSDARP00000142592"/>
<dbReference type="PaxDb" id="7955-ENSDARP00000096523"/>
<dbReference type="AGR" id="ZFIN:ZDB-GENE-030616-75"/>
<dbReference type="ZFIN" id="ZDB-GENE-030616-75">
    <property type="gene designation" value="inppl1b"/>
</dbReference>
<dbReference type="eggNOG" id="KOG0565">
    <property type="taxonomic scope" value="Eukaryota"/>
</dbReference>
<dbReference type="InParanoid" id="Q2I6J0"/>
<dbReference type="PhylomeDB" id="Q2I6J0"/>
<dbReference type="PRO" id="PR:Q2I6J0"/>
<dbReference type="Proteomes" id="UP000000437">
    <property type="component" value="Unplaced"/>
</dbReference>
<dbReference type="GO" id="GO:0005856">
    <property type="term" value="C:cytoskeleton"/>
    <property type="evidence" value="ECO:0007669"/>
    <property type="project" value="UniProtKB-SubCell"/>
</dbReference>
<dbReference type="GO" id="GO:0005829">
    <property type="term" value="C:cytosol"/>
    <property type="evidence" value="ECO:0000318"/>
    <property type="project" value="GO_Central"/>
</dbReference>
<dbReference type="GO" id="GO:0030175">
    <property type="term" value="C:filopodium"/>
    <property type="evidence" value="ECO:0007669"/>
    <property type="project" value="UniProtKB-SubCell"/>
</dbReference>
<dbReference type="GO" id="GO:0030027">
    <property type="term" value="C:lamellipodium"/>
    <property type="evidence" value="ECO:0007669"/>
    <property type="project" value="UniProtKB-SubCell"/>
</dbReference>
<dbReference type="GO" id="GO:0016020">
    <property type="term" value="C:membrane"/>
    <property type="evidence" value="ECO:0007669"/>
    <property type="project" value="UniProtKB-SubCell"/>
</dbReference>
<dbReference type="GO" id="GO:0016607">
    <property type="term" value="C:nuclear speck"/>
    <property type="evidence" value="ECO:0000250"/>
    <property type="project" value="UniProtKB"/>
</dbReference>
<dbReference type="GO" id="GO:0005634">
    <property type="term" value="C:nucleus"/>
    <property type="evidence" value="ECO:0000250"/>
    <property type="project" value="UniProtKB"/>
</dbReference>
<dbReference type="GO" id="GO:0003779">
    <property type="term" value="F:actin binding"/>
    <property type="evidence" value="ECO:0007669"/>
    <property type="project" value="UniProtKB-KW"/>
</dbReference>
<dbReference type="GO" id="GO:0004445">
    <property type="term" value="F:inositol-polyphosphate 5-phosphatase activity"/>
    <property type="evidence" value="ECO:0000318"/>
    <property type="project" value="GO_Central"/>
</dbReference>
<dbReference type="GO" id="GO:0034485">
    <property type="term" value="F:phosphatidylinositol-3,4,5-trisphosphate 5-phosphatase activity"/>
    <property type="evidence" value="ECO:0007669"/>
    <property type="project" value="UniProtKB-EC"/>
</dbReference>
<dbReference type="GO" id="GO:0017124">
    <property type="term" value="F:SH3 domain binding"/>
    <property type="evidence" value="ECO:0007669"/>
    <property type="project" value="UniProtKB-KW"/>
</dbReference>
<dbReference type="GO" id="GO:0007155">
    <property type="term" value="P:cell adhesion"/>
    <property type="evidence" value="ECO:0007669"/>
    <property type="project" value="UniProtKB-KW"/>
</dbReference>
<dbReference type="GO" id="GO:0002376">
    <property type="term" value="P:immune system process"/>
    <property type="evidence" value="ECO:0007669"/>
    <property type="project" value="UniProtKB-KW"/>
</dbReference>
<dbReference type="GO" id="GO:0043569">
    <property type="term" value="P:negative regulation of insulin-like growth factor receptor signaling pathway"/>
    <property type="evidence" value="ECO:0000318"/>
    <property type="project" value="GO_Central"/>
</dbReference>
<dbReference type="GO" id="GO:0046856">
    <property type="term" value="P:phosphatidylinositol dephosphorylation"/>
    <property type="evidence" value="ECO:0007669"/>
    <property type="project" value="InterPro"/>
</dbReference>
<dbReference type="GO" id="GO:0050776">
    <property type="term" value="P:regulation of immune response"/>
    <property type="evidence" value="ECO:0000318"/>
    <property type="project" value="GO_Central"/>
</dbReference>
<dbReference type="CDD" id="cd10343">
    <property type="entry name" value="SH2_SHIP"/>
    <property type="match status" value="1"/>
</dbReference>
<dbReference type="FunFam" id="3.60.10.10:FF:000005">
    <property type="entry name" value="phosphatidylinositol 3,4,5-trisphosphate 5-phosphatase 1"/>
    <property type="match status" value="1"/>
</dbReference>
<dbReference type="Gene3D" id="3.60.10.10">
    <property type="entry name" value="Endonuclease/exonuclease/phosphatase"/>
    <property type="match status" value="1"/>
</dbReference>
<dbReference type="Gene3D" id="3.30.505.10">
    <property type="entry name" value="SH2 domain"/>
    <property type="match status" value="1"/>
</dbReference>
<dbReference type="Gene3D" id="1.10.150.50">
    <property type="entry name" value="Transcription Factor, Ets-1"/>
    <property type="match status" value="1"/>
</dbReference>
<dbReference type="InterPro" id="IPR036691">
    <property type="entry name" value="Endo/exonu/phosph_ase_sf"/>
</dbReference>
<dbReference type="InterPro" id="IPR000300">
    <property type="entry name" value="IPPc"/>
</dbReference>
<dbReference type="InterPro" id="IPR001660">
    <property type="entry name" value="SAM"/>
</dbReference>
<dbReference type="InterPro" id="IPR013761">
    <property type="entry name" value="SAM/pointed_sf"/>
</dbReference>
<dbReference type="InterPro" id="IPR000980">
    <property type="entry name" value="SH2"/>
</dbReference>
<dbReference type="InterPro" id="IPR036860">
    <property type="entry name" value="SH2_dom_sf"/>
</dbReference>
<dbReference type="PANTHER" id="PTHR46051:SF8">
    <property type="entry name" value="PHOSPHATIDYLINOSITOL 3,4,5-TRISPHOSPHATE 5-PHOSPHATASE 2B"/>
    <property type="match status" value="1"/>
</dbReference>
<dbReference type="PANTHER" id="PTHR46051">
    <property type="entry name" value="SH2 DOMAIN-CONTAINING PROTEIN"/>
    <property type="match status" value="1"/>
</dbReference>
<dbReference type="Pfam" id="PF24147">
    <property type="entry name" value="C2_SHIP1-2_2nd"/>
    <property type="match status" value="1"/>
</dbReference>
<dbReference type="Pfam" id="PF24150">
    <property type="entry name" value="C2_SHIP1-2_first"/>
    <property type="match status" value="1"/>
</dbReference>
<dbReference type="Pfam" id="PF22669">
    <property type="entry name" value="Exo_endo_phos2"/>
    <property type="match status" value="1"/>
</dbReference>
<dbReference type="Pfam" id="PF00536">
    <property type="entry name" value="SAM_1"/>
    <property type="match status" value="1"/>
</dbReference>
<dbReference type="Pfam" id="PF00017">
    <property type="entry name" value="SH2"/>
    <property type="match status" value="1"/>
</dbReference>
<dbReference type="PRINTS" id="PR00401">
    <property type="entry name" value="SH2DOMAIN"/>
</dbReference>
<dbReference type="SMART" id="SM00128">
    <property type="entry name" value="IPPc"/>
    <property type="match status" value="1"/>
</dbReference>
<dbReference type="SMART" id="SM00252">
    <property type="entry name" value="SH2"/>
    <property type="match status" value="1"/>
</dbReference>
<dbReference type="SUPFAM" id="SSF56219">
    <property type="entry name" value="DNase I-like"/>
    <property type="match status" value="1"/>
</dbReference>
<dbReference type="SUPFAM" id="SSF47769">
    <property type="entry name" value="SAM/Pointed domain"/>
    <property type="match status" value="1"/>
</dbReference>
<dbReference type="SUPFAM" id="SSF55550">
    <property type="entry name" value="SH2 domain"/>
    <property type="match status" value="1"/>
</dbReference>
<dbReference type="PROSITE" id="PS50105">
    <property type="entry name" value="SAM_DOMAIN"/>
    <property type="match status" value="1"/>
</dbReference>
<dbReference type="PROSITE" id="PS50001">
    <property type="entry name" value="SH2"/>
    <property type="match status" value="1"/>
</dbReference>
<keyword id="KW-0009">Actin-binding</keyword>
<keyword id="KW-0130">Cell adhesion</keyword>
<keyword id="KW-0966">Cell projection</keyword>
<keyword id="KW-0963">Cytoplasm</keyword>
<keyword id="KW-0206">Cytoskeleton</keyword>
<keyword id="KW-0378">Hydrolase</keyword>
<keyword id="KW-0391">Immunity</keyword>
<keyword id="KW-0443">Lipid metabolism</keyword>
<keyword id="KW-0472">Membrane</keyword>
<keyword id="KW-0539">Nucleus</keyword>
<keyword id="KW-0597">Phosphoprotein</keyword>
<keyword id="KW-1185">Reference proteome</keyword>
<keyword id="KW-0727">SH2 domain</keyword>
<keyword id="KW-0729">SH3-binding</keyword>
<reference key="1">
    <citation type="submission" date="2005-11" db="EMBL/GenBank/DDBJ databases">
        <title>Cloning of 2 ship2 cDNAs in zebrafish.</title>
        <authorList>
            <person name="Jurynec M.J."/>
            <person name="Grunwald D.J."/>
        </authorList>
    </citation>
    <scope>NUCLEOTIDE SEQUENCE [MRNA]</scope>
    <source>
        <strain>AB</strain>
    </source>
</reference>
<organism>
    <name type="scientific">Danio rerio</name>
    <name type="common">Zebrafish</name>
    <name type="synonym">Brachydanio rerio</name>
    <dbReference type="NCBI Taxonomy" id="7955"/>
    <lineage>
        <taxon>Eukaryota</taxon>
        <taxon>Metazoa</taxon>
        <taxon>Chordata</taxon>
        <taxon>Craniata</taxon>
        <taxon>Vertebrata</taxon>
        <taxon>Euteleostomi</taxon>
        <taxon>Actinopterygii</taxon>
        <taxon>Neopterygii</taxon>
        <taxon>Teleostei</taxon>
        <taxon>Ostariophysi</taxon>
        <taxon>Cypriniformes</taxon>
        <taxon>Danionidae</taxon>
        <taxon>Danioninae</taxon>
        <taxon>Danio</taxon>
    </lineage>
</organism>
<comment type="function">
    <text evidence="3">Phosphatidylinositol (PtdIns) phosphatase that specifically hydrolyzes the 5-phosphate of phosphatidylinositol-3,4,5-trisphosphate (PtdIns(3,4,5)P3) to produce PtdIns(3,4)P2, thereby negatively regulating the PI3K (phosphoinositide 3-kinase) pathways. Plays a central role in regulation of PI3K-dependent insulin signaling, although the precise molecular mechanisms and signaling pathways remain unclear. Part of a signaling pathway that regulates actin cytoskeleton remodeling. Required for the maintenance and dynamic remodeling of actin structures as well as in endocytosis, having a major impact on ligand-induced EGFR internalization and degradation. Participates in regulation of cortical and submembraneous actin. Regulates cell adhesion and cell spreading. Acts as a negative regulator of the FC-gamma-RIIA receptor (FCGR2A). Mediates signaling from the FC-gamma-RIIB receptor (FCGR2B), playing a central role in terminating signal transduction from activating immune/hematopoietic cell receptor systems. May also hydrolyze PtdIns(1,3,4,5)P4, and could thus affect the levels of the higher inositol polyphosphates like InsP6 (By similarity).</text>
</comment>
<comment type="catalytic activity">
    <reaction evidence="3">
        <text>a 1,2-diacyl-sn-glycero-3-phospho-(1D-myo-inositol-3,4,5-trisphosphate) + H2O = a 1,2-diacyl-sn-glycero-3-phospho-(1D-myo-inositol-3,4-bisphosphate) + phosphate</text>
        <dbReference type="Rhea" id="RHEA:25528"/>
        <dbReference type="ChEBI" id="CHEBI:15377"/>
        <dbReference type="ChEBI" id="CHEBI:43474"/>
        <dbReference type="ChEBI" id="CHEBI:57658"/>
        <dbReference type="ChEBI" id="CHEBI:57836"/>
        <dbReference type="EC" id="3.1.3.86"/>
    </reaction>
</comment>
<comment type="subcellular location">
    <subcellularLocation>
        <location evidence="4">Cytoplasm</location>
        <location evidence="4">Cytosol</location>
    </subcellularLocation>
    <subcellularLocation>
        <location evidence="1">Cytoplasm</location>
        <location evidence="1">Cytoskeleton</location>
    </subcellularLocation>
    <subcellularLocation>
        <location evidence="4">Membrane</location>
        <topology evidence="1">Peripheral membrane protein</topology>
    </subcellularLocation>
    <subcellularLocation>
        <location evidence="3">Cell projection</location>
        <location evidence="3">Filopodium</location>
    </subcellularLocation>
    <subcellularLocation>
        <location evidence="3">Cell projection</location>
        <location evidence="3">Lamellipodium</location>
    </subcellularLocation>
    <subcellularLocation>
        <location evidence="2">Nucleus</location>
    </subcellularLocation>
    <subcellularLocation>
        <location evidence="2">Nucleus speckle</location>
    </subcellularLocation>
    <text evidence="1">Translocates to membrane ruffles when activated, translocation is probably due to different mechanisms depending on the stimulus and cell type.</text>
</comment>
<comment type="domain">
    <text evidence="3">The SH2 domain interacts with tyrosine phosphorylated forms of proteins.</text>
</comment>
<comment type="domain">
    <text evidence="3">The NPXY sequence motif found in many tyrosine-phosphorylated proteins is required for the specific binding of the PID domain.</text>
</comment>
<comment type="PTM">
    <text>Tyrosine phosphorylated by the members of the SRC family after exposure to a diverse array of extracellular stimuli.</text>
</comment>
<comment type="similarity">
    <text evidence="8">Belongs to the inositol 1,4,5-trisphosphate 5-phosphatase family.</text>
</comment>
<proteinExistence type="evidence at transcript level"/>
<name>SHP2B_DANRE</name>
<sequence length="1226" mass="137320">MTGAPWYHRDISRVRAEELLAHAGIDGSFLVRDSESVPGAYALCLLFQRHVHTYRILPDADGLLAVQATQGVQVNCFRTLGDLVLGYQNPNKGLVAPLLYPVMRESEANDESSDGDDEKPGSTFANSPPRAISPTATSPPSSSAAPHLLLQRLQELSPNSVGCEIVSLLDEYLHGNVCKDLENLKGGASGLQHFQGILSHICDSLHSEIDQTLSSLETLAKVFDHPSGHLTFSTMQNIGKSPEENMDNLLQKLTTLCNLLSSLEKRVLKALQEAVANHNLSLQPATPPESSRAPKKLARPNPVHSFQVKVVRYGRQTVSVDINEGVLLFDKKSGSFGVETVTLDRIVQLVKFQRGPAKLKMVVDSHHNPPRELVFESTKKREAFCRLLQLMKTTHSQKSELDVISVFVGTWNMGGTPPPGSLQSWVTCSGLGLTPDESISSLPHDIYAVGTQDNPQGEREWAEHIRATLRTSTNIDYKQVAVQSLWNIRLAVFVKPEHEARISQVNTASVKTGLGNTLGNKGAVGVSLLFNGTSMGFVNCHLTSGSDKALRRNHNFQDILRLLSLGEKQLSTFDISLRFNHLFWCGDLNYRLDLDALDILKHVSKREFEELMCADQLTRERHKRKAFFNFKEEKIMFPPTYRYERGSRDCYLWQKYKSSGVQVNGPSWCDRVLWKSYPESHVICTSYGCTDDIFTSEHSPVFATFEVGVISLFPRTESCSERASIELEAIEAIVKTSSKAKFFIEFHSRCLEEPRRSAENDSQYCEVPGFLKLGWSSKQLPKLHPVFSDLEHLRDQHLLLSVKSCDGFESYGECCVALRPTAGKLLDTFETCLTHRGEEMGSIRGRFRVYVPPDRRRIRERVYEWLSIEKDEREMMKDQLSPPSSSAFSIKAPSASYVASPNSYTNPAYFIFEEMPVFRKAEEIPSTIKESQVVCANNTVIQLPRVTGSHGHGKRSARRSDFTEIEIPGSLAPYKPSCETQSELSSAASSYQLFPGPHVPSTSPNQRHTTHSSNSSLQLQSHKNNMAPDSELSGKKLTNSYMNHSVFSRDMHKEKVRQDYQGVHQGRPVPIRNGPKLYPYVSTRVPAQCSASWIVEQPTPASGDNSLTALQIAKSLSEVDFQPADKKYPFHQMPSQQRQHGYDYGLASERNYSWEKEVSVLHGAPETVRELLSTLGLQRYTLDLSRSGWDDLDYFSGITEEELCAAGVSNPSHRRRILENLPKIWD</sequence>
<protein>
    <recommendedName>
        <fullName>Phosphatidylinositol 3,4,5-trisphosphate 5-phosphatase 2B</fullName>
        <ecNumber evidence="3">3.1.3.86</ecNumber>
    </recommendedName>
    <alternativeName>
        <fullName>Inositol polyphosphate phosphatase-like protein 1B</fullName>
        <shortName>INPPL-1B</shortName>
    </alternativeName>
    <alternativeName>
        <fullName>SH2 domain-containing inositol 5'-phosphatase 2B</fullName>
        <shortName>SH2 domain-containing inositol phosphatase 2B</shortName>
        <shortName>SHIP-2B</shortName>
    </alternativeName>
</protein>
<evidence type="ECO:0000250" key="1"/>
<evidence type="ECO:0000250" key="2">
    <source>
        <dbReference type="UniProtKB" id="D7PF45"/>
    </source>
</evidence>
<evidence type="ECO:0000250" key="3">
    <source>
        <dbReference type="UniProtKB" id="O15357"/>
    </source>
</evidence>
<evidence type="ECO:0000250" key="4">
    <source>
        <dbReference type="UniProtKB" id="Q9WVR3"/>
    </source>
</evidence>
<evidence type="ECO:0000255" key="5">
    <source>
        <dbReference type="PROSITE-ProRule" id="PRU00184"/>
    </source>
</evidence>
<evidence type="ECO:0000255" key="6">
    <source>
        <dbReference type="PROSITE-ProRule" id="PRU00191"/>
    </source>
</evidence>
<evidence type="ECO:0000256" key="7">
    <source>
        <dbReference type="SAM" id="MobiDB-lite"/>
    </source>
</evidence>
<evidence type="ECO:0000305" key="8"/>